<comment type="function">
    <text evidence="1">Part of the Sec protein translocase complex. Interacts with the SecYEG preprotein conducting channel. Has a central role in coupling the hydrolysis of ATP to the transfer of proteins into and across the cell membrane, serving as an ATP-driven molecular motor driving the stepwise translocation of polypeptide chains across the membrane.</text>
</comment>
<comment type="catalytic activity">
    <reaction evidence="1">
        <text>ATP + H2O + cellular proteinSide 1 = ADP + phosphate + cellular proteinSide 2.</text>
        <dbReference type="EC" id="7.4.2.8"/>
    </reaction>
</comment>
<comment type="cofactor">
    <cofactor evidence="1">
        <name>Zn(2+)</name>
        <dbReference type="ChEBI" id="CHEBI:29105"/>
    </cofactor>
    <text evidence="1">May bind 1 zinc ion per subunit.</text>
</comment>
<comment type="subunit">
    <text evidence="1">Monomer and homodimer. Part of the essential Sec protein translocation apparatus which comprises SecA, SecYEG and auxiliary proteins SecDF-YajC and YidC.</text>
</comment>
<comment type="subcellular location">
    <subcellularLocation>
        <location evidence="1">Cell inner membrane</location>
        <topology evidence="1">Peripheral membrane protein</topology>
        <orientation evidence="1">Cytoplasmic side</orientation>
    </subcellularLocation>
    <subcellularLocation>
        <location evidence="1">Cytoplasm</location>
    </subcellularLocation>
    <text evidence="1">Distribution is 50-50.</text>
</comment>
<comment type="similarity">
    <text evidence="1">Belongs to the SecA family.</text>
</comment>
<evidence type="ECO:0000255" key="1">
    <source>
        <dbReference type="HAMAP-Rule" id="MF_01382"/>
    </source>
</evidence>
<organism>
    <name type="scientific">Helicobacter pylori (strain P12)</name>
    <dbReference type="NCBI Taxonomy" id="570508"/>
    <lineage>
        <taxon>Bacteria</taxon>
        <taxon>Pseudomonadati</taxon>
        <taxon>Campylobacterota</taxon>
        <taxon>Epsilonproteobacteria</taxon>
        <taxon>Campylobacterales</taxon>
        <taxon>Helicobacteraceae</taxon>
        <taxon>Helicobacter</taxon>
    </lineage>
</organism>
<proteinExistence type="inferred from homology"/>
<keyword id="KW-0067">ATP-binding</keyword>
<keyword id="KW-0997">Cell inner membrane</keyword>
<keyword id="KW-1003">Cell membrane</keyword>
<keyword id="KW-0963">Cytoplasm</keyword>
<keyword id="KW-0472">Membrane</keyword>
<keyword id="KW-0479">Metal-binding</keyword>
<keyword id="KW-0547">Nucleotide-binding</keyword>
<keyword id="KW-0653">Protein transport</keyword>
<keyword id="KW-1278">Translocase</keyword>
<keyword id="KW-0811">Translocation</keyword>
<keyword id="KW-0813">Transport</keyword>
<keyword id="KW-0862">Zinc</keyword>
<dbReference type="EC" id="7.4.2.8" evidence="1"/>
<dbReference type="EMBL" id="CP001217">
    <property type="protein sequence ID" value="ACJ07946.1"/>
    <property type="molecule type" value="Genomic_DNA"/>
</dbReference>
<dbReference type="SMR" id="B6JM18"/>
<dbReference type="KEGG" id="hpp:HPP12_0794"/>
<dbReference type="HOGENOM" id="CLU_005314_3_0_7"/>
<dbReference type="Proteomes" id="UP000008198">
    <property type="component" value="Chromosome"/>
</dbReference>
<dbReference type="GO" id="GO:0031522">
    <property type="term" value="C:cell envelope Sec protein transport complex"/>
    <property type="evidence" value="ECO:0007669"/>
    <property type="project" value="TreeGrafter"/>
</dbReference>
<dbReference type="GO" id="GO:0005829">
    <property type="term" value="C:cytosol"/>
    <property type="evidence" value="ECO:0007669"/>
    <property type="project" value="TreeGrafter"/>
</dbReference>
<dbReference type="GO" id="GO:0005886">
    <property type="term" value="C:plasma membrane"/>
    <property type="evidence" value="ECO:0007669"/>
    <property type="project" value="UniProtKB-SubCell"/>
</dbReference>
<dbReference type="GO" id="GO:0005524">
    <property type="term" value="F:ATP binding"/>
    <property type="evidence" value="ECO:0007669"/>
    <property type="project" value="UniProtKB-UniRule"/>
</dbReference>
<dbReference type="GO" id="GO:0046872">
    <property type="term" value="F:metal ion binding"/>
    <property type="evidence" value="ECO:0007669"/>
    <property type="project" value="UniProtKB-KW"/>
</dbReference>
<dbReference type="GO" id="GO:0008564">
    <property type="term" value="F:protein-exporting ATPase activity"/>
    <property type="evidence" value="ECO:0007669"/>
    <property type="project" value="UniProtKB-EC"/>
</dbReference>
<dbReference type="GO" id="GO:0065002">
    <property type="term" value="P:intracellular protein transmembrane transport"/>
    <property type="evidence" value="ECO:0007669"/>
    <property type="project" value="UniProtKB-UniRule"/>
</dbReference>
<dbReference type="GO" id="GO:0017038">
    <property type="term" value="P:protein import"/>
    <property type="evidence" value="ECO:0007669"/>
    <property type="project" value="InterPro"/>
</dbReference>
<dbReference type="GO" id="GO:0006605">
    <property type="term" value="P:protein targeting"/>
    <property type="evidence" value="ECO:0007669"/>
    <property type="project" value="UniProtKB-UniRule"/>
</dbReference>
<dbReference type="GO" id="GO:0043952">
    <property type="term" value="P:protein transport by the Sec complex"/>
    <property type="evidence" value="ECO:0007669"/>
    <property type="project" value="TreeGrafter"/>
</dbReference>
<dbReference type="CDD" id="cd17928">
    <property type="entry name" value="DEXDc_SecA"/>
    <property type="match status" value="1"/>
</dbReference>
<dbReference type="CDD" id="cd18803">
    <property type="entry name" value="SF2_C_secA"/>
    <property type="match status" value="1"/>
</dbReference>
<dbReference type="FunFam" id="3.40.50.300:FF:000429">
    <property type="entry name" value="Preprotein translocase subunit SecA"/>
    <property type="match status" value="1"/>
</dbReference>
<dbReference type="FunFam" id="3.90.1440.10:FF:000001">
    <property type="entry name" value="Preprotein translocase subunit SecA"/>
    <property type="match status" value="1"/>
</dbReference>
<dbReference type="FunFam" id="1.10.3060.10:FF:000012">
    <property type="entry name" value="Protein translocase subunit SecA"/>
    <property type="match status" value="1"/>
</dbReference>
<dbReference type="Gene3D" id="1.10.3060.10">
    <property type="entry name" value="Helical scaffold and wing domains of SecA"/>
    <property type="match status" value="1"/>
</dbReference>
<dbReference type="Gene3D" id="3.40.50.300">
    <property type="entry name" value="P-loop containing nucleotide triphosphate hydrolases"/>
    <property type="match status" value="3"/>
</dbReference>
<dbReference type="Gene3D" id="3.90.1440.10">
    <property type="entry name" value="SecA, preprotein cross-linking domain"/>
    <property type="match status" value="1"/>
</dbReference>
<dbReference type="HAMAP" id="MF_01382">
    <property type="entry name" value="SecA"/>
    <property type="match status" value="1"/>
</dbReference>
<dbReference type="InterPro" id="IPR014001">
    <property type="entry name" value="Helicase_ATP-bd"/>
</dbReference>
<dbReference type="InterPro" id="IPR001650">
    <property type="entry name" value="Helicase_C-like"/>
</dbReference>
<dbReference type="InterPro" id="IPR027417">
    <property type="entry name" value="P-loop_NTPase"/>
</dbReference>
<dbReference type="InterPro" id="IPR004027">
    <property type="entry name" value="SEC_C_motif"/>
</dbReference>
<dbReference type="InterPro" id="IPR000185">
    <property type="entry name" value="SecA"/>
</dbReference>
<dbReference type="InterPro" id="IPR020937">
    <property type="entry name" value="SecA_CS"/>
</dbReference>
<dbReference type="InterPro" id="IPR011115">
    <property type="entry name" value="SecA_DEAD"/>
</dbReference>
<dbReference type="InterPro" id="IPR014018">
    <property type="entry name" value="SecA_motor_DEAD"/>
</dbReference>
<dbReference type="InterPro" id="IPR011130">
    <property type="entry name" value="SecA_preprotein_X-link_dom"/>
</dbReference>
<dbReference type="InterPro" id="IPR044722">
    <property type="entry name" value="SecA_SF2_C"/>
</dbReference>
<dbReference type="InterPro" id="IPR011116">
    <property type="entry name" value="SecA_Wing/Scaffold"/>
</dbReference>
<dbReference type="InterPro" id="IPR036266">
    <property type="entry name" value="SecA_Wing/Scaffold_sf"/>
</dbReference>
<dbReference type="InterPro" id="IPR036670">
    <property type="entry name" value="SecA_X-link_sf"/>
</dbReference>
<dbReference type="NCBIfam" id="NF006630">
    <property type="entry name" value="PRK09200.1"/>
    <property type="match status" value="1"/>
</dbReference>
<dbReference type="NCBIfam" id="TIGR00963">
    <property type="entry name" value="secA"/>
    <property type="match status" value="1"/>
</dbReference>
<dbReference type="PANTHER" id="PTHR30612:SF0">
    <property type="entry name" value="CHLOROPLAST PROTEIN-TRANSPORTING ATPASE"/>
    <property type="match status" value="1"/>
</dbReference>
<dbReference type="PANTHER" id="PTHR30612">
    <property type="entry name" value="SECA INNER MEMBRANE COMPONENT OF SEC PROTEIN SECRETION SYSTEM"/>
    <property type="match status" value="1"/>
</dbReference>
<dbReference type="Pfam" id="PF21090">
    <property type="entry name" value="P-loop_SecA"/>
    <property type="match status" value="1"/>
</dbReference>
<dbReference type="Pfam" id="PF02810">
    <property type="entry name" value="SEC-C"/>
    <property type="match status" value="1"/>
</dbReference>
<dbReference type="Pfam" id="PF07517">
    <property type="entry name" value="SecA_DEAD"/>
    <property type="match status" value="1"/>
</dbReference>
<dbReference type="Pfam" id="PF01043">
    <property type="entry name" value="SecA_PP_bind"/>
    <property type="match status" value="1"/>
</dbReference>
<dbReference type="Pfam" id="PF07516">
    <property type="entry name" value="SecA_SW"/>
    <property type="match status" value="1"/>
</dbReference>
<dbReference type="PRINTS" id="PR00906">
    <property type="entry name" value="SECA"/>
</dbReference>
<dbReference type="SMART" id="SM00957">
    <property type="entry name" value="SecA_DEAD"/>
    <property type="match status" value="1"/>
</dbReference>
<dbReference type="SMART" id="SM00958">
    <property type="entry name" value="SecA_PP_bind"/>
    <property type="match status" value="1"/>
</dbReference>
<dbReference type="SUPFAM" id="SSF81886">
    <property type="entry name" value="Helical scaffold and wing domains of SecA"/>
    <property type="match status" value="1"/>
</dbReference>
<dbReference type="SUPFAM" id="SSF52540">
    <property type="entry name" value="P-loop containing nucleoside triphosphate hydrolases"/>
    <property type="match status" value="2"/>
</dbReference>
<dbReference type="SUPFAM" id="SSF81767">
    <property type="entry name" value="Pre-protein crosslinking domain of SecA"/>
    <property type="match status" value="1"/>
</dbReference>
<dbReference type="PROSITE" id="PS01312">
    <property type="entry name" value="SECA"/>
    <property type="match status" value="1"/>
</dbReference>
<dbReference type="PROSITE" id="PS51196">
    <property type="entry name" value="SECA_MOTOR_DEAD"/>
    <property type="match status" value="1"/>
</dbReference>
<feature type="chain" id="PRO_1000145021" description="Protein translocase subunit SecA">
    <location>
        <begin position="1"/>
        <end position="865"/>
    </location>
</feature>
<feature type="binding site" evidence="1">
    <location>
        <position position="93"/>
    </location>
    <ligand>
        <name>ATP</name>
        <dbReference type="ChEBI" id="CHEBI:30616"/>
    </ligand>
</feature>
<feature type="binding site" evidence="1">
    <location>
        <begin position="111"/>
        <end position="115"/>
    </location>
    <ligand>
        <name>ATP</name>
        <dbReference type="ChEBI" id="CHEBI:30616"/>
    </ligand>
</feature>
<feature type="binding site" evidence="1">
    <location>
        <position position="501"/>
    </location>
    <ligand>
        <name>ATP</name>
        <dbReference type="ChEBI" id="CHEBI:30616"/>
    </ligand>
</feature>
<feature type="binding site" evidence="1">
    <location>
        <position position="841"/>
    </location>
    <ligand>
        <name>Zn(2+)</name>
        <dbReference type="ChEBI" id="CHEBI:29105"/>
    </ligand>
</feature>
<feature type="binding site" evidence="1">
    <location>
        <position position="843"/>
    </location>
    <ligand>
        <name>Zn(2+)</name>
        <dbReference type="ChEBI" id="CHEBI:29105"/>
    </ligand>
</feature>
<feature type="binding site" evidence="1">
    <location>
        <position position="852"/>
    </location>
    <ligand>
        <name>Zn(2+)</name>
        <dbReference type="ChEBI" id="CHEBI:29105"/>
    </ligand>
</feature>
<feature type="binding site" evidence="1">
    <location>
        <position position="853"/>
    </location>
    <ligand>
        <name>Zn(2+)</name>
        <dbReference type="ChEBI" id="CHEBI:29105"/>
    </ligand>
</feature>
<sequence length="865" mass="99063">MIKAIIGKIIGTRNDRWIKQYKKQVLTINALEPTYEKMSDVELQNAFEELKKRVRSTEKDLQEKTLLEVLPESFAITREASKRILKMRHFDVQLIGGMVLNDGKIAEMKTGEGKTLVATLAVALNALKGESVYVVTVNDYLAHRDSKEMEPLYHFLGYSVGTITASVRDDDERLEIYSKDIVYGTNNEFGFDYLRDNMKYSLEHKVQKSHAFAIVDEVDSILIDEARTPLIISGPVDRRMENYNKADEVAKSMQVEIDFTIDEKNRAILITEEGIKKAENLFGVDNLYKIENAALSHHLDQALKANYLFFIDKDYIVANNEVVIVDEFTGRLSEGRRFSEGLHQALEAKEGVSIKEESQTLADITFQNYFRMFSKLAGMTGTAQTEATEFLEIYNLEVVSIPTNLAIKRKDLNDLIYKSEKEKFDAVILKIKELHDKGQPVLVGTASIEKSETLHALLKKERIPHTVLNAKQHTKEAEIIKDAGLKGAVTIATNMAGRGVDIKLTDEIKELGGLYIIGTERHESRRIDNQLRGRSGRQGDPGTSQFYLSLEDNLLRIFGSDRIKGVMEKLGLKDGEHIESKLVTRAVENAQKKVENLHFESRKHLLEYDDVANEQRKSVYKFRDELLDASYDIGAKIAENREYALNQIFSKLKAFDHQNLSEEELLGLKNVLKEDFNAHVALEDLEKASPIEKFVAEKLKSDYENKMKVLDSEQRSRIERIVYLQILDNAWREHLYTMDNLKTGINLRGYNQKDPLVEYKKESYNLFLEFIEDIKIEAIKTFSKIQFENEQDSSDAERYLDNFSEEREHESVTYRHEETLDEDLNVAMKAFAKTPKRNEPCPCQSGKKYKDCCAKSGPKKGLFAK</sequence>
<name>SECA_HELP2</name>
<gene>
    <name evidence="1" type="primary">secA</name>
    <name type="ordered locus">HPP12_0794</name>
</gene>
<reference key="1">
    <citation type="submission" date="2008-10" db="EMBL/GenBank/DDBJ databases">
        <title>The complete genome sequence of Helicobacter pylori strain P12.</title>
        <authorList>
            <person name="Fischer W."/>
            <person name="Windhager L."/>
            <person name="Karnholz A."/>
            <person name="Zeiller M."/>
            <person name="Zimmer R."/>
            <person name="Haas R."/>
        </authorList>
    </citation>
    <scope>NUCLEOTIDE SEQUENCE [LARGE SCALE GENOMIC DNA]</scope>
    <source>
        <strain>P12</strain>
    </source>
</reference>
<protein>
    <recommendedName>
        <fullName evidence="1">Protein translocase subunit SecA</fullName>
        <ecNumber evidence="1">7.4.2.8</ecNumber>
    </recommendedName>
</protein>
<accession>B6JM18</accession>